<accession>A5CXF1</accession>
<organism>
    <name type="scientific">Vesicomyosocius okutanii subsp. Calyptogena okutanii (strain HA)</name>
    <dbReference type="NCBI Taxonomy" id="412965"/>
    <lineage>
        <taxon>Bacteria</taxon>
        <taxon>Pseudomonadati</taxon>
        <taxon>Pseudomonadota</taxon>
        <taxon>Gammaproteobacteria</taxon>
        <taxon>Candidatus Pseudothioglobaceae</taxon>
        <taxon>Candidatus Vesicomyosocius</taxon>
    </lineage>
</organism>
<protein>
    <recommendedName>
        <fullName evidence="1">Acetylglutamate kinase</fullName>
        <ecNumber evidence="1">2.7.2.8</ecNumber>
    </recommendedName>
    <alternativeName>
        <fullName evidence="1">N-acetyl-L-glutamate 5-phosphotransferase</fullName>
    </alternativeName>
    <alternativeName>
        <fullName evidence="1">NAG kinase</fullName>
        <shortName evidence="1">NAGK</shortName>
    </alternativeName>
</protein>
<evidence type="ECO:0000255" key="1">
    <source>
        <dbReference type="HAMAP-Rule" id="MF_00082"/>
    </source>
</evidence>
<name>ARGB_VESOH</name>
<comment type="function">
    <text evidence="1">Catalyzes the ATP-dependent phosphorylation of N-acetyl-L-glutamate.</text>
</comment>
<comment type="catalytic activity">
    <reaction evidence="1">
        <text>N-acetyl-L-glutamate + ATP = N-acetyl-L-glutamyl 5-phosphate + ADP</text>
        <dbReference type="Rhea" id="RHEA:14629"/>
        <dbReference type="ChEBI" id="CHEBI:30616"/>
        <dbReference type="ChEBI" id="CHEBI:44337"/>
        <dbReference type="ChEBI" id="CHEBI:57936"/>
        <dbReference type="ChEBI" id="CHEBI:456216"/>
        <dbReference type="EC" id="2.7.2.8"/>
    </reaction>
</comment>
<comment type="pathway">
    <text evidence="1">Amino-acid biosynthesis; L-arginine biosynthesis; N(2)-acetyl-L-ornithine from L-glutamate: step 2/4.</text>
</comment>
<comment type="subcellular location">
    <subcellularLocation>
        <location evidence="1">Cytoplasm</location>
    </subcellularLocation>
</comment>
<comment type="similarity">
    <text evidence="1">Belongs to the acetylglutamate kinase family. ArgB subfamily.</text>
</comment>
<proteinExistence type="inferred from homology"/>
<reference key="1">
    <citation type="journal article" date="2007" name="Curr. Biol.">
        <title>Reduced genome of the thioautotrophic intracellular symbiont in a deep-sea clam, Calyptogena okutanii.</title>
        <authorList>
            <person name="Kuwahara H."/>
            <person name="Yoshida T."/>
            <person name="Takaki Y."/>
            <person name="Shimamura S."/>
            <person name="Nishi S."/>
            <person name="Harada M."/>
            <person name="Matsuyama K."/>
            <person name="Takishita K."/>
            <person name="Kawato M."/>
            <person name="Uematsu K."/>
            <person name="Fujiwara Y."/>
            <person name="Sato T."/>
            <person name="Kato C."/>
            <person name="Kitagawa M."/>
            <person name="Kato I."/>
            <person name="Maruyama T."/>
        </authorList>
    </citation>
    <scope>NUCLEOTIDE SEQUENCE [LARGE SCALE GENOMIC DNA]</scope>
    <source>
        <strain>HA</strain>
    </source>
</reference>
<keyword id="KW-0028">Amino-acid biosynthesis</keyword>
<keyword id="KW-0055">Arginine biosynthesis</keyword>
<keyword id="KW-0067">ATP-binding</keyword>
<keyword id="KW-0963">Cytoplasm</keyword>
<keyword id="KW-0418">Kinase</keyword>
<keyword id="KW-0547">Nucleotide-binding</keyword>
<keyword id="KW-1185">Reference proteome</keyword>
<keyword id="KW-0808">Transferase</keyword>
<dbReference type="EC" id="2.7.2.8" evidence="1"/>
<dbReference type="EMBL" id="AP009247">
    <property type="protein sequence ID" value="BAF61353.1"/>
    <property type="molecule type" value="Genomic_DNA"/>
</dbReference>
<dbReference type="RefSeq" id="WP_011929623.1">
    <property type="nucleotide sequence ID" value="NC_009465.1"/>
</dbReference>
<dbReference type="SMR" id="A5CXF1"/>
<dbReference type="STRING" id="412965.COSY_0223"/>
<dbReference type="KEGG" id="vok:COSY_0223"/>
<dbReference type="eggNOG" id="COG0548">
    <property type="taxonomic scope" value="Bacteria"/>
</dbReference>
<dbReference type="HOGENOM" id="CLU_053680_0_0_6"/>
<dbReference type="OrthoDB" id="9803155at2"/>
<dbReference type="UniPathway" id="UPA00068">
    <property type="reaction ID" value="UER00107"/>
</dbReference>
<dbReference type="Proteomes" id="UP000000247">
    <property type="component" value="Chromosome"/>
</dbReference>
<dbReference type="GO" id="GO:0005737">
    <property type="term" value="C:cytoplasm"/>
    <property type="evidence" value="ECO:0007669"/>
    <property type="project" value="UniProtKB-SubCell"/>
</dbReference>
<dbReference type="GO" id="GO:0003991">
    <property type="term" value="F:acetylglutamate kinase activity"/>
    <property type="evidence" value="ECO:0007669"/>
    <property type="project" value="UniProtKB-UniRule"/>
</dbReference>
<dbReference type="GO" id="GO:0005524">
    <property type="term" value="F:ATP binding"/>
    <property type="evidence" value="ECO:0007669"/>
    <property type="project" value="UniProtKB-UniRule"/>
</dbReference>
<dbReference type="GO" id="GO:0042450">
    <property type="term" value="P:arginine biosynthetic process via ornithine"/>
    <property type="evidence" value="ECO:0007669"/>
    <property type="project" value="UniProtKB-UniRule"/>
</dbReference>
<dbReference type="GO" id="GO:0006526">
    <property type="term" value="P:L-arginine biosynthetic process"/>
    <property type="evidence" value="ECO:0007669"/>
    <property type="project" value="UniProtKB-UniPathway"/>
</dbReference>
<dbReference type="CDD" id="cd04250">
    <property type="entry name" value="AAK_NAGK-C"/>
    <property type="match status" value="1"/>
</dbReference>
<dbReference type="FunFam" id="3.40.1160.10:FF:000004">
    <property type="entry name" value="Acetylglutamate kinase"/>
    <property type="match status" value="1"/>
</dbReference>
<dbReference type="Gene3D" id="3.40.1160.10">
    <property type="entry name" value="Acetylglutamate kinase-like"/>
    <property type="match status" value="1"/>
</dbReference>
<dbReference type="HAMAP" id="MF_00082">
    <property type="entry name" value="ArgB"/>
    <property type="match status" value="1"/>
</dbReference>
<dbReference type="InterPro" id="IPR036393">
    <property type="entry name" value="AceGlu_kinase-like_sf"/>
</dbReference>
<dbReference type="InterPro" id="IPR004662">
    <property type="entry name" value="AcgluKinase_fam"/>
</dbReference>
<dbReference type="InterPro" id="IPR037528">
    <property type="entry name" value="ArgB"/>
</dbReference>
<dbReference type="InterPro" id="IPR001048">
    <property type="entry name" value="Asp/Glu/Uridylate_kinase"/>
</dbReference>
<dbReference type="InterPro" id="IPR001057">
    <property type="entry name" value="Glu/AcGlu_kinase"/>
</dbReference>
<dbReference type="InterPro" id="IPR041727">
    <property type="entry name" value="NAGK-C"/>
</dbReference>
<dbReference type="NCBIfam" id="TIGR00761">
    <property type="entry name" value="argB"/>
    <property type="match status" value="1"/>
</dbReference>
<dbReference type="PANTHER" id="PTHR23342">
    <property type="entry name" value="N-ACETYLGLUTAMATE SYNTHASE"/>
    <property type="match status" value="1"/>
</dbReference>
<dbReference type="PANTHER" id="PTHR23342:SF0">
    <property type="entry name" value="N-ACETYLGLUTAMATE SYNTHASE, MITOCHONDRIAL"/>
    <property type="match status" value="1"/>
</dbReference>
<dbReference type="Pfam" id="PF00696">
    <property type="entry name" value="AA_kinase"/>
    <property type="match status" value="1"/>
</dbReference>
<dbReference type="PIRSF" id="PIRSF000728">
    <property type="entry name" value="NAGK"/>
    <property type="match status" value="1"/>
</dbReference>
<dbReference type="PRINTS" id="PR00474">
    <property type="entry name" value="GLU5KINASE"/>
</dbReference>
<dbReference type="SUPFAM" id="SSF53633">
    <property type="entry name" value="Carbamate kinase-like"/>
    <property type="match status" value="1"/>
</dbReference>
<sequence length="309" mass="32827">MLHNMSNNIHNIASVLTESLSYFQKFQGKTIVIKYGGNAMVDEALKSSFARDIVLMKSVGMNPIVVHGGGPQIGKILEKIGKQSQFIDGMRVTDSETMDVVEMVLGGLVNKEIVNLIHQHGGHSIGLTGKDGSLISAKKLKSDIKPELTSEIIDLGHVGEVDKIDISVINLLLKGDFIPVIAPIGVGKDGFSYNINADLVAGSIAQALNAEKLILLTNTSGLLDANGELLTGLDVNIIDSLIENGTIYGGMLPKIDCALSSVRNGVKSTHIIDGRVAHAVLLEIFTDNGVGTLITCNESGTLITYNEQG</sequence>
<gene>
    <name evidence="1" type="primary">argB</name>
    <name type="ordered locus">COSY_0223</name>
</gene>
<feature type="chain" id="PRO_0000335672" description="Acetylglutamate kinase">
    <location>
        <begin position="1"/>
        <end position="309"/>
    </location>
</feature>
<feature type="binding site" evidence="1">
    <location>
        <begin position="69"/>
        <end position="70"/>
    </location>
    <ligand>
        <name>substrate</name>
    </ligand>
</feature>
<feature type="binding site" evidence="1">
    <location>
        <position position="91"/>
    </location>
    <ligand>
        <name>substrate</name>
    </ligand>
</feature>
<feature type="binding site" evidence="1">
    <location>
        <position position="194"/>
    </location>
    <ligand>
        <name>substrate</name>
    </ligand>
</feature>
<feature type="site" description="Transition state stabilizer" evidence="1">
    <location>
        <position position="34"/>
    </location>
</feature>
<feature type="site" description="Transition state stabilizer" evidence="1">
    <location>
        <position position="254"/>
    </location>
</feature>